<accession>A7X273</accession>
<proteinExistence type="inferred from homology"/>
<dbReference type="EC" id="1.17.1.8" evidence="1"/>
<dbReference type="EMBL" id="AP009324">
    <property type="protein sequence ID" value="BAF78267.1"/>
    <property type="molecule type" value="Genomic_DNA"/>
</dbReference>
<dbReference type="RefSeq" id="WP_000698231.1">
    <property type="nucleotide sequence ID" value="NC_009782.1"/>
</dbReference>
<dbReference type="SMR" id="A7X273"/>
<dbReference type="KEGG" id="saw:SAHV_1384"/>
<dbReference type="HOGENOM" id="CLU_047479_2_2_9"/>
<dbReference type="UniPathway" id="UPA00034">
    <property type="reaction ID" value="UER00018"/>
</dbReference>
<dbReference type="GO" id="GO:0005829">
    <property type="term" value="C:cytosol"/>
    <property type="evidence" value="ECO:0007669"/>
    <property type="project" value="TreeGrafter"/>
</dbReference>
<dbReference type="GO" id="GO:0008839">
    <property type="term" value="F:4-hydroxy-tetrahydrodipicolinate reductase"/>
    <property type="evidence" value="ECO:0007669"/>
    <property type="project" value="UniProtKB-EC"/>
</dbReference>
<dbReference type="GO" id="GO:0051287">
    <property type="term" value="F:NAD binding"/>
    <property type="evidence" value="ECO:0007669"/>
    <property type="project" value="UniProtKB-UniRule"/>
</dbReference>
<dbReference type="GO" id="GO:0050661">
    <property type="term" value="F:NADP binding"/>
    <property type="evidence" value="ECO:0007669"/>
    <property type="project" value="UniProtKB-UniRule"/>
</dbReference>
<dbReference type="GO" id="GO:0016726">
    <property type="term" value="F:oxidoreductase activity, acting on CH or CH2 groups, NAD or NADP as acceptor"/>
    <property type="evidence" value="ECO:0007669"/>
    <property type="project" value="UniProtKB-UniRule"/>
</dbReference>
<dbReference type="GO" id="GO:0019877">
    <property type="term" value="P:diaminopimelate biosynthetic process"/>
    <property type="evidence" value="ECO:0007669"/>
    <property type="project" value="UniProtKB-UniRule"/>
</dbReference>
<dbReference type="GO" id="GO:0009089">
    <property type="term" value="P:lysine biosynthetic process via diaminopimelate"/>
    <property type="evidence" value="ECO:0007669"/>
    <property type="project" value="UniProtKB-UniRule"/>
</dbReference>
<dbReference type="CDD" id="cd02274">
    <property type="entry name" value="DHDPR_N"/>
    <property type="match status" value="1"/>
</dbReference>
<dbReference type="FunFam" id="3.30.360.10:FF:000009">
    <property type="entry name" value="4-hydroxy-tetrahydrodipicolinate reductase"/>
    <property type="match status" value="1"/>
</dbReference>
<dbReference type="Gene3D" id="3.30.360.10">
    <property type="entry name" value="Dihydrodipicolinate Reductase, domain 2"/>
    <property type="match status" value="1"/>
</dbReference>
<dbReference type="Gene3D" id="3.40.50.720">
    <property type="entry name" value="NAD(P)-binding Rossmann-like Domain"/>
    <property type="match status" value="1"/>
</dbReference>
<dbReference type="HAMAP" id="MF_00102">
    <property type="entry name" value="DapB"/>
    <property type="match status" value="1"/>
</dbReference>
<dbReference type="InterPro" id="IPR022663">
    <property type="entry name" value="DapB_C"/>
</dbReference>
<dbReference type="InterPro" id="IPR000846">
    <property type="entry name" value="DapB_N"/>
</dbReference>
<dbReference type="InterPro" id="IPR022664">
    <property type="entry name" value="DapB_N_CS"/>
</dbReference>
<dbReference type="InterPro" id="IPR023940">
    <property type="entry name" value="DHDPR_bac"/>
</dbReference>
<dbReference type="InterPro" id="IPR036291">
    <property type="entry name" value="NAD(P)-bd_dom_sf"/>
</dbReference>
<dbReference type="NCBIfam" id="TIGR00036">
    <property type="entry name" value="dapB"/>
    <property type="match status" value="1"/>
</dbReference>
<dbReference type="PANTHER" id="PTHR20836:SF7">
    <property type="entry name" value="4-HYDROXY-TETRAHYDRODIPICOLINATE REDUCTASE"/>
    <property type="match status" value="1"/>
</dbReference>
<dbReference type="PANTHER" id="PTHR20836">
    <property type="entry name" value="DIHYDRODIPICOLINATE REDUCTASE"/>
    <property type="match status" value="1"/>
</dbReference>
<dbReference type="Pfam" id="PF05173">
    <property type="entry name" value="DapB_C"/>
    <property type="match status" value="1"/>
</dbReference>
<dbReference type="Pfam" id="PF01113">
    <property type="entry name" value="DapB_N"/>
    <property type="match status" value="1"/>
</dbReference>
<dbReference type="PIRSF" id="PIRSF000161">
    <property type="entry name" value="DHPR"/>
    <property type="match status" value="1"/>
</dbReference>
<dbReference type="SUPFAM" id="SSF55347">
    <property type="entry name" value="Glyceraldehyde-3-phosphate dehydrogenase-like, C-terminal domain"/>
    <property type="match status" value="1"/>
</dbReference>
<dbReference type="SUPFAM" id="SSF51735">
    <property type="entry name" value="NAD(P)-binding Rossmann-fold domains"/>
    <property type="match status" value="1"/>
</dbReference>
<dbReference type="PROSITE" id="PS01298">
    <property type="entry name" value="DAPB"/>
    <property type="match status" value="1"/>
</dbReference>
<gene>
    <name evidence="1" type="primary">dapB</name>
    <name type="ordered locus">SAHV_1384</name>
</gene>
<keyword id="KW-0028">Amino-acid biosynthesis</keyword>
<keyword id="KW-0963">Cytoplasm</keyword>
<keyword id="KW-0220">Diaminopimelate biosynthesis</keyword>
<keyword id="KW-0457">Lysine biosynthesis</keyword>
<keyword id="KW-0520">NAD</keyword>
<keyword id="KW-0521">NADP</keyword>
<keyword id="KW-0560">Oxidoreductase</keyword>
<feature type="chain" id="PRO_1000094003" description="4-hydroxy-tetrahydrodipicolinate reductase">
    <location>
        <begin position="1"/>
        <end position="240"/>
    </location>
</feature>
<feature type="active site" description="Proton donor/acceptor" evidence="1">
    <location>
        <position position="135"/>
    </location>
</feature>
<feature type="active site" description="Proton donor" evidence="1">
    <location>
        <position position="139"/>
    </location>
</feature>
<feature type="binding site" evidence="1">
    <location>
        <begin position="79"/>
        <end position="81"/>
    </location>
    <ligand>
        <name>NAD(+)</name>
        <dbReference type="ChEBI" id="CHEBI:57540"/>
    </ligand>
</feature>
<feature type="binding site" evidence="1">
    <location>
        <begin position="103"/>
        <end position="106"/>
    </location>
    <ligand>
        <name>NAD(+)</name>
        <dbReference type="ChEBI" id="CHEBI:57540"/>
    </ligand>
</feature>
<feature type="binding site" evidence="1">
    <location>
        <position position="136"/>
    </location>
    <ligand>
        <name>(S)-2,3,4,5-tetrahydrodipicolinate</name>
        <dbReference type="ChEBI" id="CHEBI:16845"/>
    </ligand>
</feature>
<feature type="binding site" evidence="1">
    <location>
        <begin position="145"/>
        <end position="146"/>
    </location>
    <ligand>
        <name>(S)-2,3,4,5-tetrahydrodipicolinate</name>
        <dbReference type="ChEBI" id="CHEBI:16845"/>
    </ligand>
</feature>
<comment type="function">
    <text evidence="1">Catalyzes the conversion of 4-hydroxy-tetrahydrodipicolinate (HTPA) to tetrahydrodipicolinate.</text>
</comment>
<comment type="catalytic activity">
    <reaction evidence="1">
        <text>(S)-2,3,4,5-tetrahydrodipicolinate + NAD(+) + H2O = (2S,4S)-4-hydroxy-2,3,4,5-tetrahydrodipicolinate + NADH + H(+)</text>
        <dbReference type="Rhea" id="RHEA:35323"/>
        <dbReference type="ChEBI" id="CHEBI:15377"/>
        <dbReference type="ChEBI" id="CHEBI:15378"/>
        <dbReference type="ChEBI" id="CHEBI:16845"/>
        <dbReference type="ChEBI" id="CHEBI:57540"/>
        <dbReference type="ChEBI" id="CHEBI:57945"/>
        <dbReference type="ChEBI" id="CHEBI:67139"/>
        <dbReference type="EC" id="1.17.1.8"/>
    </reaction>
</comment>
<comment type="catalytic activity">
    <reaction evidence="1">
        <text>(S)-2,3,4,5-tetrahydrodipicolinate + NADP(+) + H2O = (2S,4S)-4-hydroxy-2,3,4,5-tetrahydrodipicolinate + NADPH + H(+)</text>
        <dbReference type="Rhea" id="RHEA:35331"/>
        <dbReference type="ChEBI" id="CHEBI:15377"/>
        <dbReference type="ChEBI" id="CHEBI:15378"/>
        <dbReference type="ChEBI" id="CHEBI:16845"/>
        <dbReference type="ChEBI" id="CHEBI:57783"/>
        <dbReference type="ChEBI" id="CHEBI:58349"/>
        <dbReference type="ChEBI" id="CHEBI:67139"/>
        <dbReference type="EC" id="1.17.1.8"/>
    </reaction>
</comment>
<comment type="pathway">
    <text evidence="1">Amino-acid biosynthesis; L-lysine biosynthesis via DAP pathway; (S)-tetrahydrodipicolinate from L-aspartate: step 4/4.</text>
</comment>
<comment type="subcellular location">
    <subcellularLocation>
        <location evidence="1">Cytoplasm</location>
    </subcellularLocation>
</comment>
<comment type="similarity">
    <text evidence="1">Belongs to the DapB family.</text>
</comment>
<comment type="caution">
    <text evidence="2">Was originally thought to be a dihydrodipicolinate reductase (DHDPR), catalyzing the conversion of dihydrodipicolinate to tetrahydrodipicolinate. However, it was shown in E.coli that the substrate of the enzymatic reaction is not dihydrodipicolinate (DHDP) but in fact (2S,4S)-4-hydroxy-2,3,4,5-tetrahydrodipicolinic acid (HTPA), the product released by the DapA-catalyzed reaction.</text>
</comment>
<reference key="1">
    <citation type="journal article" date="2008" name="Antimicrob. Agents Chemother.">
        <title>Mutated response regulator graR is responsible for phenotypic conversion of Staphylococcus aureus from heterogeneous vancomycin-intermediate resistance to vancomycin-intermediate resistance.</title>
        <authorList>
            <person name="Neoh H.-M."/>
            <person name="Cui L."/>
            <person name="Yuzawa H."/>
            <person name="Takeuchi F."/>
            <person name="Matsuo M."/>
            <person name="Hiramatsu K."/>
        </authorList>
    </citation>
    <scope>NUCLEOTIDE SEQUENCE [LARGE SCALE GENOMIC DNA]</scope>
    <source>
        <strain>Mu3 / ATCC 700698</strain>
    </source>
</reference>
<organism>
    <name type="scientific">Staphylococcus aureus (strain Mu3 / ATCC 700698)</name>
    <dbReference type="NCBI Taxonomy" id="418127"/>
    <lineage>
        <taxon>Bacteria</taxon>
        <taxon>Bacillati</taxon>
        <taxon>Bacillota</taxon>
        <taxon>Bacilli</taxon>
        <taxon>Bacillales</taxon>
        <taxon>Staphylococcaceae</taxon>
        <taxon>Staphylococcus</taxon>
    </lineage>
</organism>
<sequence>MKILLIGYGAMNQRVARLAEEKGHEIVGVIENTPKATTPYQQYQHIADVKDADVAIDFSNPNLLFPLLDEEFHLPLVVATTGEKEKLLNKLDELSQNMPVFFSANMSYGVHALTKILAAAVPLLDDFDIELTEAHHNKKVDAPSGTLEKLYDVIVSLKENVTPVYDRHELNEKRQPQDIGIHSIRGGTIVGEHEVLFAGTDETIQITHRAQSKDIFANGAIQAAERLVNKPNGFYTFDNL</sequence>
<evidence type="ECO:0000255" key="1">
    <source>
        <dbReference type="HAMAP-Rule" id="MF_00102"/>
    </source>
</evidence>
<evidence type="ECO:0000305" key="2"/>
<name>DAPB_STAA1</name>
<protein>
    <recommendedName>
        <fullName evidence="1">4-hydroxy-tetrahydrodipicolinate reductase</fullName>
        <shortName evidence="1">HTPA reductase</shortName>
        <ecNumber evidence="1">1.17.1.8</ecNumber>
    </recommendedName>
</protein>